<evidence type="ECO:0000255" key="1">
    <source>
        <dbReference type="HAMAP-Rule" id="MF_00115"/>
    </source>
</evidence>
<comment type="function">
    <text evidence="1">Channel that opens in response to stretch forces in the membrane lipid bilayer. May participate in the regulation of osmotic pressure changes within the cell.</text>
</comment>
<comment type="subunit">
    <text evidence="1">Homopentamer.</text>
</comment>
<comment type="subcellular location">
    <subcellularLocation>
        <location evidence="1">Cell inner membrane</location>
        <topology evidence="1">Multi-pass membrane protein</topology>
    </subcellularLocation>
</comment>
<comment type="similarity">
    <text evidence="1">Belongs to the MscL family.</text>
</comment>
<proteinExistence type="inferred from homology"/>
<organism>
    <name type="scientific">Legionella pneumophila (strain Lens)</name>
    <dbReference type="NCBI Taxonomy" id="297245"/>
    <lineage>
        <taxon>Bacteria</taxon>
        <taxon>Pseudomonadati</taxon>
        <taxon>Pseudomonadota</taxon>
        <taxon>Gammaproteobacteria</taxon>
        <taxon>Legionellales</taxon>
        <taxon>Legionellaceae</taxon>
        <taxon>Legionella</taxon>
    </lineage>
</organism>
<sequence length="127" mass="13899">MSLLKEFKEFAMRGNVMDLAVAVVMGVAFNKIVTALVDGIIMPCVGLLLGGVNIAGLSFTVGDAQIKWGNFLQNVIDFIIVAFAIFILIKLINLLQRKKANEPEPVTPEVQLLTEIRDLLARNSSKI</sequence>
<dbReference type="EMBL" id="CR628337">
    <property type="protein sequence ID" value="CAH16701.1"/>
    <property type="molecule type" value="Genomic_DNA"/>
</dbReference>
<dbReference type="RefSeq" id="WP_011216419.1">
    <property type="nucleotide sequence ID" value="NC_006369.1"/>
</dbReference>
<dbReference type="SMR" id="Q5WTR2"/>
<dbReference type="KEGG" id="lpf:lpl2461"/>
<dbReference type="LegioList" id="lpl2461"/>
<dbReference type="HOGENOM" id="CLU_095787_0_0_6"/>
<dbReference type="Proteomes" id="UP000002517">
    <property type="component" value="Chromosome"/>
</dbReference>
<dbReference type="GO" id="GO:0005886">
    <property type="term" value="C:plasma membrane"/>
    <property type="evidence" value="ECO:0007669"/>
    <property type="project" value="UniProtKB-SubCell"/>
</dbReference>
<dbReference type="GO" id="GO:0008381">
    <property type="term" value="F:mechanosensitive monoatomic ion channel activity"/>
    <property type="evidence" value="ECO:0007669"/>
    <property type="project" value="UniProtKB-UniRule"/>
</dbReference>
<dbReference type="Gene3D" id="1.10.1200.120">
    <property type="entry name" value="Large-conductance mechanosensitive channel, MscL, domain 1"/>
    <property type="match status" value="1"/>
</dbReference>
<dbReference type="HAMAP" id="MF_00115">
    <property type="entry name" value="MscL"/>
    <property type="match status" value="1"/>
</dbReference>
<dbReference type="InterPro" id="IPR019823">
    <property type="entry name" value="Mechanosensitive_channel_CS"/>
</dbReference>
<dbReference type="InterPro" id="IPR001185">
    <property type="entry name" value="MS_channel"/>
</dbReference>
<dbReference type="InterPro" id="IPR037673">
    <property type="entry name" value="MSC/AndL"/>
</dbReference>
<dbReference type="InterPro" id="IPR036019">
    <property type="entry name" value="MscL_channel"/>
</dbReference>
<dbReference type="NCBIfam" id="TIGR00220">
    <property type="entry name" value="mscL"/>
    <property type="match status" value="1"/>
</dbReference>
<dbReference type="NCBIfam" id="NF001843">
    <property type="entry name" value="PRK00567.1-4"/>
    <property type="match status" value="1"/>
</dbReference>
<dbReference type="PANTHER" id="PTHR30266:SF2">
    <property type="entry name" value="LARGE-CONDUCTANCE MECHANOSENSITIVE CHANNEL"/>
    <property type="match status" value="1"/>
</dbReference>
<dbReference type="PANTHER" id="PTHR30266">
    <property type="entry name" value="MECHANOSENSITIVE CHANNEL MSCL"/>
    <property type="match status" value="1"/>
</dbReference>
<dbReference type="Pfam" id="PF01741">
    <property type="entry name" value="MscL"/>
    <property type="match status" value="1"/>
</dbReference>
<dbReference type="PRINTS" id="PR01264">
    <property type="entry name" value="MECHCHANNEL"/>
</dbReference>
<dbReference type="SUPFAM" id="SSF81330">
    <property type="entry name" value="Gated mechanosensitive channel"/>
    <property type="match status" value="1"/>
</dbReference>
<dbReference type="PROSITE" id="PS01327">
    <property type="entry name" value="MSCL"/>
    <property type="match status" value="1"/>
</dbReference>
<name>MSCL_LEGPL</name>
<accession>Q5WTR2</accession>
<reference key="1">
    <citation type="journal article" date="2004" name="Nat. Genet.">
        <title>Evidence in the Legionella pneumophila genome for exploitation of host cell functions and high genome plasticity.</title>
        <authorList>
            <person name="Cazalet C."/>
            <person name="Rusniok C."/>
            <person name="Brueggemann H."/>
            <person name="Zidane N."/>
            <person name="Magnier A."/>
            <person name="Ma L."/>
            <person name="Tichit M."/>
            <person name="Jarraud S."/>
            <person name="Bouchier C."/>
            <person name="Vandenesch F."/>
            <person name="Kunst F."/>
            <person name="Etienne J."/>
            <person name="Glaser P."/>
            <person name="Buchrieser C."/>
        </authorList>
    </citation>
    <scope>NUCLEOTIDE SEQUENCE [LARGE SCALE GENOMIC DNA]</scope>
    <source>
        <strain>Lens</strain>
    </source>
</reference>
<protein>
    <recommendedName>
        <fullName evidence="1">Large-conductance mechanosensitive channel</fullName>
    </recommendedName>
</protein>
<keyword id="KW-0997">Cell inner membrane</keyword>
<keyword id="KW-1003">Cell membrane</keyword>
<keyword id="KW-0407">Ion channel</keyword>
<keyword id="KW-0406">Ion transport</keyword>
<keyword id="KW-0472">Membrane</keyword>
<keyword id="KW-0812">Transmembrane</keyword>
<keyword id="KW-1133">Transmembrane helix</keyword>
<keyword id="KW-0813">Transport</keyword>
<gene>
    <name evidence="1" type="primary">mscL</name>
    <name type="ordered locus">lpl2461</name>
</gene>
<feature type="chain" id="PRO_0000238009" description="Large-conductance mechanosensitive channel">
    <location>
        <begin position="1"/>
        <end position="127"/>
    </location>
</feature>
<feature type="transmembrane region" description="Helical" evidence="1">
    <location>
        <begin position="9"/>
        <end position="29"/>
    </location>
</feature>
<feature type="transmembrane region" description="Helical" evidence="1">
    <location>
        <begin position="32"/>
        <end position="52"/>
    </location>
</feature>
<feature type="transmembrane region" description="Helical" evidence="1">
    <location>
        <begin position="75"/>
        <end position="95"/>
    </location>
</feature>